<evidence type="ECO:0000250" key="1"/>
<evidence type="ECO:0000250" key="2">
    <source>
        <dbReference type="UniProtKB" id="Q9JLJ1"/>
    </source>
</evidence>
<evidence type="ECO:0000250" key="3">
    <source>
        <dbReference type="UniProtKB" id="Q9Y6D0"/>
    </source>
</evidence>
<evidence type="ECO:0000255" key="4"/>
<evidence type="ECO:0000256" key="5">
    <source>
        <dbReference type="SAM" id="MobiDB-lite"/>
    </source>
</evidence>
<evidence type="ECO:0000305" key="6"/>
<evidence type="ECO:0000312" key="7">
    <source>
        <dbReference type="EMBL" id="AAR26540.1"/>
    </source>
</evidence>
<protein>
    <recommendedName>
        <fullName evidence="3">Selenoprotein K</fullName>
        <shortName evidence="7">SelK</shortName>
    </recommendedName>
</protein>
<reference key="1">
    <citation type="submission" date="2003-11" db="EMBL/GenBank/DDBJ databases">
        <title>SELK/HSPC030 like gene is transcribed in normal chinchilla middle ear mucosa.</title>
        <authorList>
            <person name="Erdos G."/>
            <person name="Hu F.Z."/>
            <person name="Donfack J."/>
            <person name="Ahmed A.I."/>
            <person name="Preston R.A."/>
            <person name="Hayes J.D."/>
            <person name="Post J.C."/>
            <person name="Ehrlich G.D."/>
        </authorList>
    </citation>
    <scope>NUCLEOTIDE SEQUENCE [MRNA]</scope>
    <source>
        <tissue>Middle ear mucosa</tissue>
    </source>
</reference>
<name>SELK_CHILA</name>
<comment type="function">
    <text evidence="2 3">Required for Ca(2+) flux in immune cells and plays a role in T-cell proliferation and in T-cell and neutrophil migration (By similarity). Involved in endoplasmic reticulum-associated degradation (ERAD) of soluble glycosylated proteins (By similarity). Required for palmitoylation and cell surface expression of CD36 and involved in macrophage uptake of low-density lipoprotein and in foam cell formation (By similarity). Together with ZDHHC6, required for palmitoylation of ITPR1 in immune cells, leading to regulate ITPR1 stability and function. Plays a role in protection of cells from ER stress-induced apoptosis. Protects cells from oxidative stress when overexpressed in cardiomyocytes (By similarity).</text>
</comment>
<comment type="subunit">
    <text evidence="3">Interacts with DERL1, DERL2, DERL3 and SELENOS. The SELENOK-SELENOS complex interacts with VCP. Interacts with ZDHHC6.</text>
</comment>
<comment type="subcellular location">
    <subcellularLocation>
        <location evidence="3">Endoplasmic reticulum membrane</location>
        <topology evidence="4">Single-pass membrane protein</topology>
    </subcellularLocation>
    <subcellularLocation>
        <location evidence="3">Cell membrane</location>
        <topology evidence="4">Single-pass membrane protein</topology>
    </subcellularLocation>
    <text evidence="3">Probably mainly localized in the ER.</text>
</comment>
<comment type="PTM">
    <text evidence="2">Cleaved by CAPN2/m-calpain in resting macrophages but not in activated macrophages. Macrophage activation up-regulates expression of the calpain inhibitor CAST/calpastatin, resulting in inhibition of CAPN2 activity (By similarity).</text>
</comment>
<comment type="PTM">
    <text evidence="3">Truncated SELENOK proteins produced by failed UGA/Sec decoding are ubiquitinated by the CRL2(KLHDC2) complex, which recognizes the diglycine (Gly-Gly) at the C-terminus of truncated SELENOK proteins.</text>
</comment>
<comment type="similarity">
    <text evidence="6">Belongs to the selenoprotein K family.</text>
</comment>
<comment type="sequence caution" evidence="6">
    <conflict type="erroneous termination">
        <sequence resource="EMBL-CDS" id="AAR26540"/>
    </conflict>
    <text>Truncated C-terminus.</text>
</comment>
<keyword id="KW-0106">Calcium</keyword>
<keyword id="KW-0109">Calcium transport</keyword>
<keyword id="KW-1003">Cell membrane</keyword>
<keyword id="KW-0256">Endoplasmic reticulum</keyword>
<keyword id="KW-0406">Ion transport</keyword>
<keyword id="KW-0472">Membrane</keyword>
<keyword id="KW-1185">Reference proteome</keyword>
<keyword id="KW-0712">Selenocysteine</keyword>
<keyword id="KW-0812">Transmembrane</keyword>
<keyword id="KW-1133">Transmembrane helix</keyword>
<keyword id="KW-0813">Transport</keyword>
<keyword id="KW-0832">Ubl conjugation</keyword>
<proteinExistence type="inferred from homology"/>
<gene>
    <name evidence="3" type="primary">SELENOK</name>
    <name evidence="7" type="synonym">SELK</name>
</gene>
<feature type="chain" id="PRO_0000097668" description="Selenoprotein K">
    <location>
        <begin position="1"/>
        <end position="94"/>
    </location>
</feature>
<feature type="transmembrane region" description="Helical" evidence="4">
    <location>
        <begin position="20"/>
        <end position="42"/>
    </location>
</feature>
<feature type="region of interest" description="Disordered" evidence="5">
    <location>
        <begin position="47"/>
        <end position="94"/>
    </location>
</feature>
<feature type="site" description="Cleavage; by CAPN2" evidence="1">
    <location>
        <begin position="81"/>
        <end position="82"/>
    </location>
</feature>
<feature type="non-standard amino acid" description="Selenocysteine" evidence="1">
    <location>
        <position position="92"/>
    </location>
</feature>
<dbReference type="EMBL" id="AY462141">
    <property type="protein sequence ID" value="AAR26540.1"/>
    <property type="status" value="ALT_SEQ"/>
    <property type="molecule type" value="mRNA"/>
</dbReference>
<dbReference type="GeneID" id="102005283"/>
<dbReference type="GeneID" id="102027036"/>
<dbReference type="CTD" id="58515"/>
<dbReference type="OrthoDB" id="167295at2759"/>
<dbReference type="Proteomes" id="UP000694398">
    <property type="component" value="Unplaced"/>
</dbReference>
<dbReference type="GO" id="GO:0005783">
    <property type="term" value="C:endoplasmic reticulum"/>
    <property type="evidence" value="ECO:0000250"/>
    <property type="project" value="UniProtKB"/>
</dbReference>
<dbReference type="GO" id="GO:0005789">
    <property type="term" value="C:endoplasmic reticulum membrane"/>
    <property type="evidence" value="ECO:0000250"/>
    <property type="project" value="UniProtKB"/>
</dbReference>
<dbReference type="GO" id="GO:0005794">
    <property type="term" value="C:Golgi apparatus"/>
    <property type="evidence" value="ECO:0007669"/>
    <property type="project" value="TreeGrafter"/>
</dbReference>
<dbReference type="GO" id="GO:0005886">
    <property type="term" value="C:plasma membrane"/>
    <property type="evidence" value="ECO:0007669"/>
    <property type="project" value="UniProtKB-SubCell"/>
</dbReference>
<dbReference type="GO" id="GO:0006816">
    <property type="term" value="P:calcium ion transport"/>
    <property type="evidence" value="ECO:0007669"/>
    <property type="project" value="UniProtKB-KW"/>
</dbReference>
<dbReference type="GO" id="GO:0032469">
    <property type="term" value="P:endoplasmic reticulum calcium ion homeostasis"/>
    <property type="evidence" value="ECO:0007669"/>
    <property type="project" value="TreeGrafter"/>
</dbReference>
<dbReference type="GO" id="GO:0018345">
    <property type="term" value="P:protein palmitoylation"/>
    <property type="evidence" value="ECO:0000250"/>
    <property type="project" value="UniProtKB"/>
</dbReference>
<dbReference type="InterPro" id="IPR024491">
    <property type="entry name" value="Se_SelK/SelG"/>
</dbReference>
<dbReference type="PANTHER" id="PTHR16875">
    <property type="entry name" value="SELENOPROTEIN K"/>
    <property type="match status" value="1"/>
</dbReference>
<dbReference type="PANTHER" id="PTHR16875:SF0">
    <property type="entry name" value="SELENOPROTEIN K"/>
    <property type="match status" value="1"/>
</dbReference>
<dbReference type="Pfam" id="PF10961">
    <property type="entry name" value="SelK_SelG"/>
    <property type="match status" value="1"/>
</dbReference>
<organism>
    <name type="scientific">Chinchilla lanigera</name>
    <name type="common">Long-tailed chinchilla</name>
    <name type="synonym">Chinchilla villidera</name>
    <dbReference type="NCBI Taxonomy" id="34839"/>
    <lineage>
        <taxon>Eukaryota</taxon>
        <taxon>Metazoa</taxon>
        <taxon>Chordata</taxon>
        <taxon>Craniata</taxon>
        <taxon>Vertebrata</taxon>
        <taxon>Euteleostomi</taxon>
        <taxon>Mammalia</taxon>
        <taxon>Eutheria</taxon>
        <taxon>Euarchontoglires</taxon>
        <taxon>Glires</taxon>
        <taxon>Rodentia</taxon>
        <taxon>Hystricomorpha</taxon>
        <taxon>Chinchillidae</taxon>
        <taxon>Chinchilla</taxon>
    </lineage>
</organism>
<sequence>MVYISNGQVLDSRSQSPWRLSLITDFFWGIAEFVVLFFKTLLQQDVKKGRGYRNSSDSRYDDGRGPPGNPPRRMGRISHLHGPSPPPMAGGUGR</sequence>
<accession>Q6S9C4</accession>